<gene>
    <name type="primary">phoP</name>
    <name type="ordered locus">Z1859</name>
    <name type="ordered locus">ECs1602</name>
</gene>
<accession>Q8X738</accession>
<accession>Q7AF15</accession>
<name>PHOP_ECO57</name>
<keyword id="KW-0010">Activator</keyword>
<keyword id="KW-0963">Cytoplasm</keyword>
<keyword id="KW-0238">DNA-binding</keyword>
<keyword id="KW-0597">Phosphoprotein</keyword>
<keyword id="KW-1185">Reference proteome</keyword>
<keyword id="KW-0678">Repressor</keyword>
<keyword id="KW-0804">Transcription</keyword>
<keyword id="KW-0805">Transcription regulation</keyword>
<keyword id="KW-0902">Two-component regulatory system</keyword>
<organism>
    <name type="scientific">Escherichia coli O157:H7</name>
    <dbReference type="NCBI Taxonomy" id="83334"/>
    <lineage>
        <taxon>Bacteria</taxon>
        <taxon>Pseudomonadati</taxon>
        <taxon>Pseudomonadota</taxon>
        <taxon>Gammaproteobacteria</taxon>
        <taxon>Enterobacterales</taxon>
        <taxon>Enterobacteriaceae</taxon>
        <taxon>Escherichia</taxon>
    </lineage>
</organism>
<comment type="function">
    <text evidence="1">Member of the two-component regulatory system PhoQ/PhoP involved in virulence, adaptation to low Mg(2+) environments and the control of acid resistance genes.</text>
</comment>
<comment type="subcellular location">
    <subcellularLocation>
        <location evidence="4">Cytoplasm</location>
    </subcellularLocation>
</comment>
<comment type="PTM">
    <text evidence="4">Phosphorylated by PhoQ.</text>
</comment>
<proteinExistence type="inferred from homology"/>
<protein>
    <recommendedName>
        <fullName>Transcriptional regulatory protein PhoP</fullName>
    </recommendedName>
</protein>
<feature type="chain" id="PRO_0000081196" description="Transcriptional regulatory protein PhoP">
    <location>
        <begin position="1"/>
        <end position="223"/>
    </location>
</feature>
<feature type="domain" description="Response regulatory" evidence="2">
    <location>
        <begin position="2"/>
        <end position="116"/>
    </location>
</feature>
<feature type="DNA-binding region" description="OmpR/PhoB-type" evidence="3">
    <location>
        <begin position="124"/>
        <end position="222"/>
    </location>
</feature>
<feature type="modified residue" description="4-aspartylphosphate" evidence="2">
    <location>
        <position position="51"/>
    </location>
</feature>
<dbReference type="EMBL" id="AE005174">
    <property type="protein sequence ID" value="AAG55956.1"/>
    <property type="molecule type" value="Genomic_DNA"/>
</dbReference>
<dbReference type="EMBL" id="BA000007">
    <property type="protein sequence ID" value="BAB35025.1"/>
    <property type="molecule type" value="Genomic_DNA"/>
</dbReference>
<dbReference type="PIR" id="B90829">
    <property type="entry name" value="B90829"/>
</dbReference>
<dbReference type="PIR" id="H85686">
    <property type="entry name" value="H85686"/>
</dbReference>
<dbReference type="RefSeq" id="NP_309629.1">
    <property type="nucleotide sequence ID" value="NC_002695.1"/>
</dbReference>
<dbReference type="RefSeq" id="WP_001265474.1">
    <property type="nucleotide sequence ID" value="NZ_VOAI01000035.1"/>
</dbReference>
<dbReference type="SMR" id="Q8X738"/>
<dbReference type="STRING" id="155864.Z1859"/>
<dbReference type="GeneID" id="913289"/>
<dbReference type="KEGG" id="ece:Z1859"/>
<dbReference type="KEGG" id="ecs:ECs_1602"/>
<dbReference type="PATRIC" id="fig|386585.9.peg.1702"/>
<dbReference type="eggNOG" id="COG0745">
    <property type="taxonomic scope" value="Bacteria"/>
</dbReference>
<dbReference type="HOGENOM" id="CLU_000445_30_1_6"/>
<dbReference type="OMA" id="SYPRRVW"/>
<dbReference type="Proteomes" id="UP000000558">
    <property type="component" value="Chromosome"/>
</dbReference>
<dbReference type="Proteomes" id="UP000002519">
    <property type="component" value="Chromosome"/>
</dbReference>
<dbReference type="GO" id="GO:0005829">
    <property type="term" value="C:cytosol"/>
    <property type="evidence" value="ECO:0007669"/>
    <property type="project" value="TreeGrafter"/>
</dbReference>
<dbReference type="GO" id="GO:0032993">
    <property type="term" value="C:protein-DNA complex"/>
    <property type="evidence" value="ECO:0007669"/>
    <property type="project" value="TreeGrafter"/>
</dbReference>
<dbReference type="GO" id="GO:0000156">
    <property type="term" value="F:phosphorelay response regulator activity"/>
    <property type="evidence" value="ECO:0007669"/>
    <property type="project" value="TreeGrafter"/>
</dbReference>
<dbReference type="GO" id="GO:0000976">
    <property type="term" value="F:transcription cis-regulatory region binding"/>
    <property type="evidence" value="ECO:0007669"/>
    <property type="project" value="TreeGrafter"/>
</dbReference>
<dbReference type="GO" id="GO:0006355">
    <property type="term" value="P:regulation of DNA-templated transcription"/>
    <property type="evidence" value="ECO:0007669"/>
    <property type="project" value="InterPro"/>
</dbReference>
<dbReference type="CDD" id="cd19934">
    <property type="entry name" value="REC_OmpR_EcPhoP-like"/>
    <property type="match status" value="1"/>
</dbReference>
<dbReference type="CDD" id="cd00383">
    <property type="entry name" value="trans_reg_C"/>
    <property type="match status" value="1"/>
</dbReference>
<dbReference type="FunFam" id="3.40.50.2300:FF:000002">
    <property type="entry name" value="DNA-binding response regulator PhoP"/>
    <property type="match status" value="1"/>
</dbReference>
<dbReference type="FunFam" id="1.10.10.10:FF:000098">
    <property type="entry name" value="Two-component system response regulator PhoP"/>
    <property type="match status" value="1"/>
</dbReference>
<dbReference type="Gene3D" id="3.40.50.2300">
    <property type="match status" value="1"/>
</dbReference>
<dbReference type="Gene3D" id="6.10.250.690">
    <property type="match status" value="1"/>
</dbReference>
<dbReference type="Gene3D" id="1.10.10.10">
    <property type="entry name" value="Winged helix-like DNA-binding domain superfamily/Winged helix DNA-binding domain"/>
    <property type="match status" value="1"/>
</dbReference>
<dbReference type="InterPro" id="IPR011006">
    <property type="entry name" value="CheY-like_superfamily"/>
</dbReference>
<dbReference type="InterPro" id="IPR001867">
    <property type="entry name" value="OmpR/PhoB-type_DNA-bd"/>
</dbReference>
<dbReference type="InterPro" id="IPR001789">
    <property type="entry name" value="Sig_transdc_resp-reg_receiver"/>
</dbReference>
<dbReference type="InterPro" id="IPR039420">
    <property type="entry name" value="WalR-like"/>
</dbReference>
<dbReference type="InterPro" id="IPR036388">
    <property type="entry name" value="WH-like_DNA-bd_sf"/>
</dbReference>
<dbReference type="NCBIfam" id="NF008078">
    <property type="entry name" value="PRK10816.1"/>
    <property type="match status" value="1"/>
</dbReference>
<dbReference type="PANTHER" id="PTHR48111">
    <property type="entry name" value="REGULATOR OF RPOS"/>
    <property type="match status" value="1"/>
</dbReference>
<dbReference type="PANTHER" id="PTHR48111:SF71">
    <property type="entry name" value="TRANSCRIPTIONAL REGULATORY PROTEIN PHOP"/>
    <property type="match status" value="1"/>
</dbReference>
<dbReference type="Pfam" id="PF00072">
    <property type="entry name" value="Response_reg"/>
    <property type="match status" value="1"/>
</dbReference>
<dbReference type="Pfam" id="PF00486">
    <property type="entry name" value="Trans_reg_C"/>
    <property type="match status" value="1"/>
</dbReference>
<dbReference type="SMART" id="SM00448">
    <property type="entry name" value="REC"/>
    <property type="match status" value="1"/>
</dbReference>
<dbReference type="SMART" id="SM00862">
    <property type="entry name" value="Trans_reg_C"/>
    <property type="match status" value="1"/>
</dbReference>
<dbReference type="SUPFAM" id="SSF52172">
    <property type="entry name" value="CheY-like"/>
    <property type="match status" value="1"/>
</dbReference>
<dbReference type="PROSITE" id="PS51755">
    <property type="entry name" value="OMPR_PHOB"/>
    <property type="match status" value="1"/>
</dbReference>
<dbReference type="PROSITE" id="PS50110">
    <property type="entry name" value="RESPONSE_REGULATORY"/>
    <property type="match status" value="1"/>
</dbReference>
<sequence>MRVLVVEDNALLRHHLKVQIQDAGHQVDDAEDAKEADYYLNEHLPDIAIVDLGLPDEDGLSLICRWRSNDVSLPILVLTARESWQDKVEVLSAGADDYVTKPFHIEEVMARMQALMRRNSGLASQVISLPPFQVDLSRRELSINDEVIKLTAFEYTIMETLIRNNGKVVSKDSLMLQLYPDAELRESHTIDVLMGRLRKKIQAQYPQEVITTVRGQGYLFELR</sequence>
<evidence type="ECO:0000250" key="1"/>
<evidence type="ECO:0000255" key="2">
    <source>
        <dbReference type="PROSITE-ProRule" id="PRU00169"/>
    </source>
</evidence>
<evidence type="ECO:0000255" key="3">
    <source>
        <dbReference type="PROSITE-ProRule" id="PRU01091"/>
    </source>
</evidence>
<evidence type="ECO:0000305" key="4"/>
<reference key="1">
    <citation type="journal article" date="2001" name="Nature">
        <title>Genome sequence of enterohaemorrhagic Escherichia coli O157:H7.</title>
        <authorList>
            <person name="Perna N.T."/>
            <person name="Plunkett G. III"/>
            <person name="Burland V."/>
            <person name="Mau B."/>
            <person name="Glasner J.D."/>
            <person name="Rose D.J."/>
            <person name="Mayhew G.F."/>
            <person name="Evans P.S."/>
            <person name="Gregor J."/>
            <person name="Kirkpatrick H.A."/>
            <person name="Posfai G."/>
            <person name="Hackett J."/>
            <person name="Klink S."/>
            <person name="Boutin A."/>
            <person name="Shao Y."/>
            <person name="Miller L."/>
            <person name="Grotbeck E.J."/>
            <person name="Davis N.W."/>
            <person name="Lim A."/>
            <person name="Dimalanta E.T."/>
            <person name="Potamousis K."/>
            <person name="Apodaca J."/>
            <person name="Anantharaman T.S."/>
            <person name="Lin J."/>
            <person name="Yen G."/>
            <person name="Schwartz D.C."/>
            <person name="Welch R.A."/>
            <person name="Blattner F.R."/>
        </authorList>
    </citation>
    <scope>NUCLEOTIDE SEQUENCE [LARGE SCALE GENOMIC DNA]</scope>
    <source>
        <strain>O157:H7 / EDL933 / ATCC 700927 / EHEC</strain>
    </source>
</reference>
<reference key="2">
    <citation type="journal article" date="2001" name="DNA Res.">
        <title>Complete genome sequence of enterohemorrhagic Escherichia coli O157:H7 and genomic comparison with a laboratory strain K-12.</title>
        <authorList>
            <person name="Hayashi T."/>
            <person name="Makino K."/>
            <person name="Ohnishi M."/>
            <person name="Kurokawa K."/>
            <person name="Ishii K."/>
            <person name="Yokoyama K."/>
            <person name="Han C.-G."/>
            <person name="Ohtsubo E."/>
            <person name="Nakayama K."/>
            <person name="Murata T."/>
            <person name="Tanaka M."/>
            <person name="Tobe T."/>
            <person name="Iida T."/>
            <person name="Takami H."/>
            <person name="Honda T."/>
            <person name="Sasakawa C."/>
            <person name="Ogasawara N."/>
            <person name="Yasunaga T."/>
            <person name="Kuhara S."/>
            <person name="Shiba T."/>
            <person name="Hattori M."/>
            <person name="Shinagawa H."/>
        </authorList>
    </citation>
    <scope>NUCLEOTIDE SEQUENCE [LARGE SCALE GENOMIC DNA]</scope>
    <source>
        <strain>O157:H7 / Sakai / RIMD 0509952 / EHEC</strain>
    </source>
</reference>